<protein>
    <recommendedName>
        <fullName>Probable translocation protein y4yL</fullName>
    </recommendedName>
</protein>
<comment type="function">
    <text>Could be involved in the secretion of an unknown factor.</text>
</comment>
<comment type="subcellular location">
    <subcellularLocation>
        <location evidence="2">Cell membrane</location>
        <topology evidence="2">Multi-pass membrane protein</topology>
    </subcellularLocation>
</comment>
<comment type="similarity">
    <text evidence="2">Belongs to the FliP/MopC/SpaP family.</text>
</comment>
<geneLocation type="plasmid">
    <name>sym pNGR234a</name>
</geneLocation>
<reference key="1">
    <citation type="journal article" date="1997" name="Nature">
        <title>Molecular basis of symbiosis between Rhizobium and legumes.</title>
        <authorList>
            <person name="Freiberg C.A."/>
            <person name="Fellay R."/>
            <person name="Bairoch A."/>
            <person name="Broughton W.J."/>
            <person name="Rosenthal A."/>
            <person name="Perret X."/>
        </authorList>
    </citation>
    <scope>NUCLEOTIDE SEQUENCE [LARGE SCALE GENOMIC DNA]</scope>
    <source>
        <strain>NBRC 101917 / NGR234</strain>
    </source>
</reference>
<reference key="2">
    <citation type="journal article" date="2009" name="Appl. Environ. Microbiol.">
        <title>Rhizobium sp. strain NGR234 possesses a remarkable number of secretion systems.</title>
        <authorList>
            <person name="Schmeisser C."/>
            <person name="Liesegang H."/>
            <person name="Krysciak D."/>
            <person name="Bakkou N."/>
            <person name="Le Quere A."/>
            <person name="Wollherr A."/>
            <person name="Heinemeyer I."/>
            <person name="Morgenstern B."/>
            <person name="Pommerening-Roeser A."/>
            <person name="Flores M."/>
            <person name="Palacios R."/>
            <person name="Brenner S."/>
            <person name="Gottschalk G."/>
            <person name="Schmitz R.A."/>
            <person name="Broughton W.J."/>
            <person name="Perret X."/>
            <person name="Strittmatter A.W."/>
            <person name="Streit W.R."/>
        </authorList>
    </citation>
    <scope>NUCLEOTIDE SEQUENCE [LARGE SCALE GENOMIC DNA]</scope>
    <source>
        <strain>NBRC 101917 / NGR234</strain>
    </source>
</reference>
<evidence type="ECO:0000255" key="1"/>
<evidence type="ECO:0000305" key="2"/>
<dbReference type="EMBL" id="U00090">
    <property type="protein sequence ID" value="AAB91951.1"/>
    <property type="molecule type" value="Genomic_DNA"/>
</dbReference>
<dbReference type="RefSeq" id="NP_444164.1">
    <property type="nucleotide sequence ID" value="NC_000914.2"/>
</dbReference>
<dbReference type="RefSeq" id="WP_010875102.1">
    <property type="nucleotide sequence ID" value="NC_000914.2"/>
</dbReference>
<dbReference type="SMR" id="P55720"/>
<dbReference type="KEGG" id="rhi:NGR_a00610"/>
<dbReference type="eggNOG" id="COG4790">
    <property type="taxonomic scope" value="Bacteria"/>
</dbReference>
<dbReference type="HOGENOM" id="CLU_042028_2_0_5"/>
<dbReference type="OrthoDB" id="9805111at2"/>
<dbReference type="Proteomes" id="UP000001054">
    <property type="component" value="Plasmid pNGR234a"/>
</dbReference>
<dbReference type="GO" id="GO:0005886">
    <property type="term" value="C:plasma membrane"/>
    <property type="evidence" value="ECO:0007669"/>
    <property type="project" value="UniProtKB-SubCell"/>
</dbReference>
<dbReference type="GO" id="GO:0009306">
    <property type="term" value="P:protein secretion"/>
    <property type="evidence" value="ECO:0007669"/>
    <property type="project" value="InterPro"/>
</dbReference>
<dbReference type="InterPro" id="IPR005838">
    <property type="entry name" value="T3SS_IM_P"/>
</dbReference>
<dbReference type="InterPro" id="IPR005773">
    <property type="entry name" value="T3SS_YscR-like"/>
</dbReference>
<dbReference type="NCBIfam" id="NF009438">
    <property type="entry name" value="PRK12797.1"/>
    <property type="match status" value="1"/>
</dbReference>
<dbReference type="NCBIfam" id="TIGR01102">
    <property type="entry name" value="yscR"/>
    <property type="match status" value="1"/>
</dbReference>
<dbReference type="PANTHER" id="PTHR30587">
    <property type="entry name" value="FLAGELLAR BIOSYNTHETIC PROTEIN FLIP"/>
    <property type="match status" value="1"/>
</dbReference>
<dbReference type="PANTHER" id="PTHR30587:SF2">
    <property type="entry name" value="SURFACE PRESENTATION OF ANTIGENS PROTEIN SPAP"/>
    <property type="match status" value="1"/>
</dbReference>
<dbReference type="Pfam" id="PF00813">
    <property type="entry name" value="FliP"/>
    <property type="match status" value="1"/>
</dbReference>
<dbReference type="PRINTS" id="PR01302">
    <property type="entry name" value="TYPE3IMPPROT"/>
</dbReference>
<dbReference type="PROSITE" id="PS01060">
    <property type="entry name" value="FLIP_1"/>
    <property type="match status" value="1"/>
</dbReference>
<dbReference type="PROSITE" id="PS01061">
    <property type="entry name" value="FLIP_2"/>
    <property type="match status" value="1"/>
</dbReference>
<keyword id="KW-1003">Cell membrane</keyword>
<keyword id="KW-0472">Membrane</keyword>
<keyword id="KW-0614">Plasmid</keyword>
<keyword id="KW-1185">Reference proteome</keyword>
<keyword id="KW-0812">Transmembrane</keyword>
<keyword id="KW-1133">Transmembrane helix</keyword>
<keyword id="KW-0813">Transport</keyword>
<proteinExistence type="inferred from homology"/>
<feature type="chain" id="PRO_0000192003" description="Probable translocation protein y4yL">
    <location>
        <begin position="1"/>
        <end position="222"/>
    </location>
</feature>
<feature type="transmembrane region" description="Helical" evidence="1">
    <location>
        <begin position="6"/>
        <end position="26"/>
    </location>
</feature>
<feature type="transmembrane region" description="Helical" evidence="1">
    <location>
        <begin position="52"/>
        <end position="72"/>
    </location>
</feature>
<feature type="transmembrane region" description="Helical" evidence="1">
    <location>
        <begin position="158"/>
        <end position="178"/>
    </location>
</feature>
<feature type="transmembrane region" description="Helical" evidence="1">
    <location>
        <begin position="182"/>
        <end position="202"/>
    </location>
</feature>
<name>Y4YL_SINFN</name>
<organism>
    <name type="scientific">Sinorhizobium fredii (strain NBRC 101917 / NGR234)</name>
    <dbReference type="NCBI Taxonomy" id="394"/>
    <lineage>
        <taxon>Bacteria</taxon>
        <taxon>Pseudomonadati</taxon>
        <taxon>Pseudomonadota</taxon>
        <taxon>Alphaproteobacteria</taxon>
        <taxon>Hyphomicrobiales</taxon>
        <taxon>Rhizobiaceae</taxon>
        <taxon>Sinorhizobium/Ensifer group</taxon>
        <taxon>Sinorhizobium</taxon>
    </lineage>
</organism>
<sequence>MTEMQPAILALLAITAALGLLVLAVVTTTAFVKVSVVLFLVRNALGTQTIPPNIVLYAAALILTMFVSAPVAEQTYDRITDPRLRYQSLDDWAEAAKAGSQPLLEHLKKFTNEEQRRFFLSSTEKVWPEEMRAGVTADDFAILVPSFLISELKRAFEIGFLLYLPFIVIDLIVTTILMAMGMSMVSPTIIAVPFKLFLFVAIDGWSRLMHGLVLSYTMPGAL</sequence>
<gene>
    <name type="ordered locus">NGR_a00610</name>
    <name type="ORF">y4yL</name>
</gene>
<accession>P55720</accession>